<sequence length="270" mass="29630">MFRNQYDTDVTTWSPAGRLFQVEYAMEAVKQGSACVGLRSRTHAVLAAANKAASELSSHQRKVFRVADHAGVALAGLTADGRVLSRFLRSECINHAFVYDAPLPVSRLALRLADKAQVCTQRSWKRPYGVGLLVAGLDESGAHLYYNCPSGNYFEYQAFAIGSRSQAAKTFLERRFEGYNDYTPEQLIKDALSAIKETLQGEKLTSSNCTVAIVGRKDDGTVEPFEMIDVKRIQEIIDSMEAAEEAPAAEAESSSMQEEDKGTDAAPMDI</sequence>
<proteinExistence type="evidence at transcript level"/>
<feature type="chain" id="PRO_0000124074" description="Proteasome subunit alpha type-1">
    <location>
        <begin position="1"/>
        <end position="270"/>
    </location>
</feature>
<feature type="region of interest" description="Disordered" evidence="3">
    <location>
        <begin position="239"/>
        <end position="270"/>
    </location>
</feature>
<feature type="compositionally biased region" description="Low complexity" evidence="3">
    <location>
        <begin position="245"/>
        <end position="256"/>
    </location>
</feature>
<gene>
    <name type="primary">PAF1</name>
    <name type="ordered locus">Os02g0133800</name>
    <name type="ordered locus">LOC_Os02g04100</name>
    <name evidence="5" type="ORF">OsJ_05275</name>
    <name type="ORF">P0030G11.18</name>
    <name type="ORF">P0585B01.3</name>
</gene>
<protein>
    <recommendedName>
        <fullName>Proteasome subunit alpha type-1</fullName>
    </recommendedName>
    <alternativeName>
        <fullName>20S proteasome alpha subunit F</fullName>
    </alternativeName>
    <alternativeName>
        <fullName>20S proteasome subunit alpha-6</fullName>
    </alternativeName>
    <alternativeName>
        <fullName>Proteasome component C2</fullName>
    </alternativeName>
</protein>
<evidence type="ECO:0000250" key="1"/>
<evidence type="ECO:0000255" key="2">
    <source>
        <dbReference type="PROSITE-ProRule" id="PRU00808"/>
    </source>
</evidence>
<evidence type="ECO:0000256" key="3">
    <source>
        <dbReference type="SAM" id="MobiDB-lite"/>
    </source>
</evidence>
<evidence type="ECO:0000305" key="4"/>
<evidence type="ECO:0000312" key="5">
    <source>
        <dbReference type="EMBL" id="EEE56253.1"/>
    </source>
</evidence>
<reference key="1">
    <citation type="journal article" date="1997" name="Mol. Gen. Genet.">
        <title>Molecular and biochemical characterization of a proteasome subunit from rice and carrot cells.</title>
        <authorList>
            <person name="Umeda M."/>
            <person name="Fujii N."/>
            <person name="Manabe Y."/>
            <person name="Uchimiya H."/>
        </authorList>
    </citation>
    <scope>NUCLEOTIDE SEQUENCE [MRNA]</scope>
</reference>
<reference key="2">
    <citation type="journal article" date="2005" name="Nature">
        <title>The map-based sequence of the rice genome.</title>
        <authorList>
            <consortium name="International rice genome sequencing project (IRGSP)"/>
        </authorList>
    </citation>
    <scope>NUCLEOTIDE SEQUENCE [LARGE SCALE GENOMIC DNA]</scope>
    <source>
        <strain>cv. Nipponbare</strain>
    </source>
</reference>
<reference key="3">
    <citation type="journal article" date="2008" name="Nucleic Acids Res.">
        <title>The rice annotation project database (RAP-DB): 2008 update.</title>
        <authorList>
            <consortium name="The rice annotation project (RAP)"/>
        </authorList>
    </citation>
    <scope>GENOME REANNOTATION</scope>
    <source>
        <strain>cv. Nipponbare</strain>
    </source>
</reference>
<reference key="4">
    <citation type="journal article" date="2013" name="Rice">
        <title>Improvement of the Oryza sativa Nipponbare reference genome using next generation sequence and optical map data.</title>
        <authorList>
            <person name="Kawahara Y."/>
            <person name="de la Bastide M."/>
            <person name="Hamilton J.P."/>
            <person name="Kanamori H."/>
            <person name="McCombie W.R."/>
            <person name="Ouyang S."/>
            <person name="Schwartz D.C."/>
            <person name="Tanaka T."/>
            <person name="Wu J."/>
            <person name="Zhou S."/>
            <person name="Childs K.L."/>
            <person name="Davidson R.M."/>
            <person name="Lin H."/>
            <person name="Quesada-Ocampo L."/>
            <person name="Vaillancourt B."/>
            <person name="Sakai H."/>
            <person name="Lee S.S."/>
            <person name="Kim J."/>
            <person name="Numa H."/>
            <person name="Itoh T."/>
            <person name="Buell C.R."/>
            <person name="Matsumoto T."/>
        </authorList>
    </citation>
    <scope>GENOME REANNOTATION</scope>
    <source>
        <strain>cv. Nipponbare</strain>
    </source>
</reference>
<reference key="5">
    <citation type="journal article" date="2005" name="PLoS Biol.">
        <title>The genomes of Oryza sativa: a history of duplications.</title>
        <authorList>
            <person name="Yu J."/>
            <person name="Wang J."/>
            <person name="Lin W."/>
            <person name="Li S."/>
            <person name="Li H."/>
            <person name="Zhou J."/>
            <person name="Ni P."/>
            <person name="Dong W."/>
            <person name="Hu S."/>
            <person name="Zeng C."/>
            <person name="Zhang J."/>
            <person name="Zhang Y."/>
            <person name="Li R."/>
            <person name="Xu Z."/>
            <person name="Li S."/>
            <person name="Li X."/>
            <person name="Zheng H."/>
            <person name="Cong L."/>
            <person name="Lin L."/>
            <person name="Yin J."/>
            <person name="Geng J."/>
            <person name="Li G."/>
            <person name="Shi J."/>
            <person name="Liu J."/>
            <person name="Lv H."/>
            <person name="Li J."/>
            <person name="Wang J."/>
            <person name="Deng Y."/>
            <person name="Ran L."/>
            <person name="Shi X."/>
            <person name="Wang X."/>
            <person name="Wu Q."/>
            <person name="Li C."/>
            <person name="Ren X."/>
            <person name="Wang J."/>
            <person name="Wang X."/>
            <person name="Li D."/>
            <person name="Liu D."/>
            <person name="Zhang X."/>
            <person name="Ji Z."/>
            <person name="Zhao W."/>
            <person name="Sun Y."/>
            <person name="Zhang Z."/>
            <person name="Bao J."/>
            <person name="Han Y."/>
            <person name="Dong L."/>
            <person name="Ji J."/>
            <person name="Chen P."/>
            <person name="Wu S."/>
            <person name="Liu J."/>
            <person name="Xiao Y."/>
            <person name="Bu D."/>
            <person name="Tan J."/>
            <person name="Yang L."/>
            <person name="Ye C."/>
            <person name="Zhang J."/>
            <person name="Xu J."/>
            <person name="Zhou Y."/>
            <person name="Yu Y."/>
            <person name="Zhang B."/>
            <person name="Zhuang S."/>
            <person name="Wei H."/>
            <person name="Liu B."/>
            <person name="Lei M."/>
            <person name="Yu H."/>
            <person name="Li Y."/>
            <person name="Xu H."/>
            <person name="Wei S."/>
            <person name="He X."/>
            <person name="Fang L."/>
            <person name="Zhang Z."/>
            <person name="Zhang Y."/>
            <person name="Huang X."/>
            <person name="Su Z."/>
            <person name="Tong W."/>
            <person name="Li J."/>
            <person name="Tong Z."/>
            <person name="Li S."/>
            <person name="Ye J."/>
            <person name="Wang L."/>
            <person name="Fang L."/>
            <person name="Lei T."/>
            <person name="Chen C.-S."/>
            <person name="Chen H.-C."/>
            <person name="Xu Z."/>
            <person name="Li H."/>
            <person name="Huang H."/>
            <person name="Zhang F."/>
            <person name="Xu H."/>
            <person name="Li N."/>
            <person name="Zhao C."/>
            <person name="Li S."/>
            <person name="Dong L."/>
            <person name="Huang Y."/>
            <person name="Li L."/>
            <person name="Xi Y."/>
            <person name="Qi Q."/>
            <person name="Li W."/>
            <person name="Zhang B."/>
            <person name="Hu W."/>
            <person name="Zhang Y."/>
            <person name="Tian X."/>
            <person name="Jiao Y."/>
            <person name="Liang X."/>
            <person name="Jin J."/>
            <person name="Gao L."/>
            <person name="Zheng W."/>
            <person name="Hao B."/>
            <person name="Liu S.-M."/>
            <person name="Wang W."/>
            <person name="Yuan L."/>
            <person name="Cao M."/>
            <person name="McDermott J."/>
            <person name="Samudrala R."/>
            <person name="Wang J."/>
            <person name="Wong G.K.-S."/>
            <person name="Yang H."/>
        </authorList>
    </citation>
    <scope>NUCLEOTIDE SEQUENCE [LARGE SCALE GENOMIC DNA]</scope>
    <source>
        <strain>cv. Nipponbare</strain>
    </source>
</reference>
<reference key="6">
    <citation type="journal article" date="2003" name="Science">
        <title>Collection, mapping, and annotation of over 28,000 cDNA clones from japonica rice.</title>
        <authorList>
            <consortium name="The rice full-length cDNA consortium"/>
        </authorList>
    </citation>
    <scope>NUCLEOTIDE SEQUENCE [LARGE SCALE MRNA]</scope>
    <source>
        <strain>cv. Nipponbare</strain>
    </source>
</reference>
<dbReference type="EMBL" id="D37886">
    <property type="protein sequence ID" value="BAA07128.1"/>
    <property type="molecule type" value="mRNA"/>
</dbReference>
<dbReference type="EMBL" id="AP004799">
    <property type="protein sequence ID" value="BAD10085.1"/>
    <property type="status" value="ALT_INIT"/>
    <property type="molecule type" value="Genomic_DNA"/>
</dbReference>
<dbReference type="EMBL" id="AP004997">
    <property type="protein sequence ID" value="BAD08003.1"/>
    <property type="status" value="ALT_INIT"/>
    <property type="molecule type" value="Genomic_DNA"/>
</dbReference>
<dbReference type="EMBL" id="AP008208">
    <property type="protein sequence ID" value="BAF07722.1"/>
    <property type="molecule type" value="Genomic_DNA"/>
</dbReference>
<dbReference type="EMBL" id="AP014958">
    <property type="protein sequence ID" value="BAS76843.1"/>
    <property type="molecule type" value="Genomic_DNA"/>
</dbReference>
<dbReference type="EMBL" id="CM000139">
    <property type="protein sequence ID" value="EEE56253.1"/>
    <property type="molecule type" value="Genomic_DNA"/>
</dbReference>
<dbReference type="EMBL" id="AK103646">
    <property type="protein sequence ID" value="BAG96186.1"/>
    <property type="molecule type" value="mRNA"/>
</dbReference>
<dbReference type="EMBL" id="AK109376">
    <property type="protein sequence ID" value="BAG98703.1"/>
    <property type="molecule type" value="mRNA"/>
</dbReference>
<dbReference type="PIR" id="T03925">
    <property type="entry name" value="T03925"/>
</dbReference>
<dbReference type="RefSeq" id="XP_015626959.1">
    <property type="nucleotide sequence ID" value="XM_015771473.1"/>
</dbReference>
<dbReference type="SMR" id="P52428"/>
<dbReference type="FunCoup" id="P52428">
    <property type="interactions" value="2966"/>
</dbReference>
<dbReference type="STRING" id="39947.P52428"/>
<dbReference type="PaxDb" id="39947-P52428"/>
<dbReference type="EnsemblPlants" id="Os02t0133800-01">
    <property type="protein sequence ID" value="Os02t0133800-01"/>
    <property type="gene ID" value="Os02g0133800"/>
</dbReference>
<dbReference type="Gramene" id="Os02t0133800-01">
    <property type="protein sequence ID" value="Os02t0133800-01"/>
    <property type="gene ID" value="Os02g0133800"/>
</dbReference>
<dbReference type="KEGG" id="dosa:Os02g0133800"/>
<dbReference type="eggNOG" id="KOG0863">
    <property type="taxonomic scope" value="Eukaryota"/>
</dbReference>
<dbReference type="HOGENOM" id="CLU_035750_8_0_1"/>
<dbReference type="InParanoid" id="P52428"/>
<dbReference type="OMA" id="NTQVYGK"/>
<dbReference type="OrthoDB" id="431557at2759"/>
<dbReference type="Proteomes" id="UP000000763">
    <property type="component" value="Chromosome 2"/>
</dbReference>
<dbReference type="Proteomes" id="UP000007752">
    <property type="component" value="Chromosome 2"/>
</dbReference>
<dbReference type="Proteomes" id="UP000059680">
    <property type="component" value="Chromosome 2"/>
</dbReference>
<dbReference type="GO" id="GO:0005737">
    <property type="term" value="C:cytoplasm"/>
    <property type="evidence" value="ECO:0007669"/>
    <property type="project" value="UniProtKB-SubCell"/>
</dbReference>
<dbReference type="GO" id="GO:0005634">
    <property type="term" value="C:nucleus"/>
    <property type="evidence" value="ECO:0007669"/>
    <property type="project" value="UniProtKB-SubCell"/>
</dbReference>
<dbReference type="GO" id="GO:0019773">
    <property type="term" value="C:proteasome core complex, alpha-subunit complex"/>
    <property type="evidence" value="ECO:0000250"/>
    <property type="project" value="UniProtKB"/>
</dbReference>
<dbReference type="GO" id="GO:0043161">
    <property type="term" value="P:proteasome-mediated ubiquitin-dependent protein catabolic process"/>
    <property type="evidence" value="ECO:0000318"/>
    <property type="project" value="GO_Central"/>
</dbReference>
<dbReference type="CDD" id="cd03749">
    <property type="entry name" value="proteasome_alpha_type_1"/>
    <property type="match status" value="1"/>
</dbReference>
<dbReference type="FunFam" id="3.60.20.10:FF:000016">
    <property type="entry name" value="Proteasome subunit alpha type-6"/>
    <property type="match status" value="1"/>
</dbReference>
<dbReference type="Gene3D" id="3.60.20.10">
    <property type="entry name" value="Glutamine Phosphoribosylpyrophosphate, subunit 1, domain 1"/>
    <property type="match status" value="1"/>
</dbReference>
<dbReference type="InterPro" id="IPR029055">
    <property type="entry name" value="Ntn_hydrolases_N"/>
</dbReference>
<dbReference type="InterPro" id="IPR050115">
    <property type="entry name" value="Proteasome_alpha"/>
</dbReference>
<dbReference type="InterPro" id="IPR023332">
    <property type="entry name" value="Proteasome_alpha-type"/>
</dbReference>
<dbReference type="InterPro" id="IPR035144">
    <property type="entry name" value="Proteasome_alpha1"/>
</dbReference>
<dbReference type="InterPro" id="IPR000426">
    <property type="entry name" value="Proteasome_asu_N"/>
</dbReference>
<dbReference type="InterPro" id="IPR001353">
    <property type="entry name" value="Proteasome_sua/b"/>
</dbReference>
<dbReference type="PANTHER" id="PTHR11599">
    <property type="entry name" value="PROTEASOME SUBUNIT ALPHA/BETA"/>
    <property type="match status" value="1"/>
</dbReference>
<dbReference type="Pfam" id="PF00227">
    <property type="entry name" value="Proteasome"/>
    <property type="match status" value="1"/>
</dbReference>
<dbReference type="Pfam" id="PF10584">
    <property type="entry name" value="Proteasome_A_N"/>
    <property type="match status" value="1"/>
</dbReference>
<dbReference type="SMART" id="SM00948">
    <property type="entry name" value="Proteasome_A_N"/>
    <property type="match status" value="1"/>
</dbReference>
<dbReference type="SUPFAM" id="SSF56235">
    <property type="entry name" value="N-terminal nucleophile aminohydrolases (Ntn hydrolases)"/>
    <property type="match status" value="1"/>
</dbReference>
<dbReference type="PROSITE" id="PS00388">
    <property type="entry name" value="PROTEASOME_ALPHA_1"/>
    <property type="match status" value="1"/>
</dbReference>
<dbReference type="PROSITE" id="PS51475">
    <property type="entry name" value="PROTEASOME_ALPHA_2"/>
    <property type="match status" value="1"/>
</dbReference>
<comment type="function">
    <text>The proteasome is a multicatalytic proteinase complex which is characterized by its ability to cleave peptides with Arg, Phe, Tyr, Leu, and Glu adjacent to the leaving group at neutral or slightly basic pH. The proteasome has an ATP-dependent proteolytic activity.</text>
</comment>
<comment type="subunit">
    <text evidence="1">The 26S proteasome consists of a 20S proteasome core and two 19S regulatory subunits. The 20S proteasome core is composed of 28 subunits that are arranged in four stacked rings, resulting in a barrel-shaped structure. The two end rings are each formed by seven alpha subunits, and the two central rings are each formed by seven beta subunits. The catalytic chamber with the active sites is on the inside of the barrel (By similarity).</text>
</comment>
<comment type="subcellular location">
    <subcellularLocation>
        <location evidence="1">Cytoplasm</location>
    </subcellularLocation>
    <subcellularLocation>
        <location evidence="1">Nucleus</location>
    </subcellularLocation>
</comment>
<comment type="similarity">
    <text evidence="2">Belongs to the peptidase T1A family.</text>
</comment>
<comment type="sequence caution" evidence="4">
    <conflict type="erroneous initiation">
        <sequence resource="EMBL-CDS" id="BAD08003"/>
    </conflict>
</comment>
<comment type="sequence caution" evidence="4">
    <conflict type="erroneous initiation">
        <sequence resource="EMBL-CDS" id="BAD10085"/>
    </conflict>
</comment>
<name>PSA1_ORYSJ</name>
<organism>
    <name type="scientific">Oryza sativa subsp. japonica</name>
    <name type="common">Rice</name>
    <dbReference type="NCBI Taxonomy" id="39947"/>
    <lineage>
        <taxon>Eukaryota</taxon>
        <taxon>Viridiplantae</taxon>
        <taxon>Streptophyta</taxon>
        <taxon>Embryophyta</taxon>
        <taxon>Tracheophyta</taxon>
        <taxon>Spermatophyta</taxon>
        <taxon>Magnoliopsida</taxon>
        <taxon>Liliopsida</taxon>
        <taxon>Poales</taxon>
        <taxon>Poaceae</taxon>
        <taxon>BOP clade</taxon>
        <taxon>Oryzoideae</taxon>
        <taxon>Oryzeae</taxon>
        <taxon>Oryzinae</taxon>
        <taxon>Oryza</taxon>
        <taxon>Oryza sativa</taxon>
    </lineage>
</organism>
<accession>P52428</accession>
<accession>Q0E466</accession>
<accession>Q6Z6I2</accession>
<keyword id="KW-0963">Cytoplasm</keyword>
<keyword id="KW-0539">Nucleus</keyword>
<keyword id="KW-0647">Proteasome</keyword>
<keyword id="KW-1185">Reference proteome</keyword>